<accession>B9DVE2</accession>
<organism>
    <name type="scientific">Streptococcus uberis (strain ATCC BAA-854 / 0140J)</name>
    <dbReference type="NCBI Taxonomy" id="218495"/>
    <lineage>
        <taxon>Bacteria</taxon>
        <taxon>Bacillati</taxon>
        <taxon>Bacillota</taxon>
        <taxon>Bacilli</taxon>
        <taxon>Lactobacillales</taxon>
        <taxon>Streptococcaceae</taxon>
        <taxon>Streptococcus</taxon>
    </lineage>
</organism>
<protein>
    <recommendedName>
        <fullName evidence="1">3-hydroxyacyl-[acyl-carrier-protein] dehydratase FabZ</fullName>
        <ecNumber evidence="1">4.2.1.59</ecNumber>
    </recommendedName>
    <alternativeName>
        <fullName evidence="1">(3R)-hydroxymyristoyl-[acyl-carrier-protein] dehydratase</fullName>
        <shortName evidence="1">(3R)-hydroxymyristoyl-ACP dehydrase</shortName>
    </alternativeName>
    <alternativeName>
        <fullName evidence="1">Beta-hydroxyacyl-ACP dehydratase</fullName>
    </alternativeName>
</protein>
<sequence length="140" mass="15422">MIDIKDIQEALPHRYPMLLVDRVLEVSDDHIVALKNVTINEPFFNGHFPHYPVMPGVLIMEALAQTAGVLELSKEENKGKLVFYAGMDKVKFKKQVIPGDQLIMTATFIKRRGTIAVVEAKAEVDGKLAASGTLTFAIGS</sequence>
<dbReference type="EC" id="4.2.1.59" evidence="1"/>
<dbReference type="EMBL" id="AM946015">
    <property type="protein sequence ID" value="CAR43203.1"/>
    <property type="molecule type" value="Genomic_DNA"/>
</dbReference>
<dbReference type="RefSeq" id="WP_015911802.1">
    <property type="nucleotide sequence ID" value="NC_012004.1"/>
</dbReference>
<dbReference type="SMR" id="B9DVE2"/>
<dbReference type="STRING" id="218495.SUB1493"/>
<dbReference type="GeneID" id="93826811"/>
<dbReference type="KEGG" id="sub:SUB1493"/>
<dbReference type="eggNOG" id="COG0764">
    <property type="taxonomic scope" value="Bacteria"/>
</dbReference>
<dbReference type="HOGENOM" id="CLU_078912_1_2_9"/>
<dbReference type="OrthoDB" id="9772788at2"/>
<dbReference type="Proteomes" id="UP000000449">
    <property type="component" value="Chromosome"/>
</dbReference>
<dbReference type="GO" id="GO:0005737">
    <property type="term" value="C:cytoplasm"/>
    <property type="evidence" value="ECO:0007669"/>
    <property type="project" value="UniProtKB-SubCell"/>
</dbReference>
<dbReference type="GO" id="GO:0016020">
    <property type="term" value="C:membrane"/>
    <property type="evidence" value="ECO:0007669"/>
    <property type="project" value="GOC"/>
</dbReference>
<dbReference type="GO" id="GO:0019171">
    <property type="term" value="F:(3R)-hydroxyacyl-[acyl-carrier-protein] dehydratase activity"/>
    <property type="evidence" value="ECO:0007669"/>
    <property type="project" value="UniProtKB-EC"/>
</dbReference>
<dbReference type="GO" id="GO:0006633">
    <property type="term" value="P:fatty acid biosynthetic process"/>
    <property type="evidence" value="ECO:0007669"/>
    <property type="project" value="UniProtKB-UniRule"/>
</dbReference>
<dbReference type="GO" id="GO:0009245">
    <property type="term" value="P:lipid A biosynthetic process"/>
    <property type="evidence" value="ECO:0007669"/>
    <property type="project" value="UniProtKB-UniRule"/>
</dbReference>
<dbReference type="CDD" id="cd01288">
    <property type="entry name" value="FabZ"/>
    <property type="match status" value="1"/>
</dbReference>
<dbReference type="FunFam" id="3.10.129.10:FF:000001">
    <property type="entry name" value="3-hydroxyacyl-[acyl-carrier-protein] dehydratase FabZ"/>
    <property type="match status" value="1"/>
</dbReference>
<dbReference type="Gene3D" id="3.10.129.10">
    <property type="entry name" value="Hotdog Thioesterase"/>
    <property type="match status" value="1"/>
</dbReference>
<dbReference type="HAMAP" id="MF_00406">
    <property type="entry name" value="FabZ"/>
    <property type="match status" value="1"/>
</dbReference>
<dbReference type="InterPro" id="IPR013114">
    <property type="entry name" value="FabA_FabZ"/>
</dbReference>
<dbReference type="InterPro" id="IPR010084">
    <property type="entry name" value="FabZ"/>
</dbReference>
<dbReference type="InterPro" id="IPR029069">
    <property type="entry name" value="HotDog_dom_sf"/>
</dbReference>
<dbReference type="NCBIfam" id="TIGR01750">
    <property type="entry name" value="fabZ"/>
    <property type="match status" value="1"/>
</dbReference>
<dbReference type="NCBIfam" id="NF000582">
    <property type="entry name" value="PRK00006.1"/>
    <property type="match status" value="1"/>
</dbReference>
<dbReference type="PANTHER" id="PTHR30272">
    <property type="entry name" value="3-HYDROXYACYL-[ACYL-CARRIER-PROTEIN] DEHYDRATASE"/>
    <property type="match status" value="1"/>
</dbReference>
<dbReference type="PANTHER" id="PTHR30272:SF1">
    <property type="entry name" value="3-HYDROXYACYL-[ACYL-CARRIER-PROTEIN] DEHYDRATASE"/>
    <property type="match status" value="1"/>
</dbReference>
<dbReference type="Pfam" id="PF07977">
    <property type="entry name" value="FabA"/>
    <property type="match status" value="1"/>
</dbReference>
<dbReference type="SUPFAM" id="SSF54637">
    <property type="entry name" value="Thioesterase/thiol ester dehydrase-isomerase"/>
    <property type="match status" value="1"/>
</dbReference>
<name>FABZ_STRU0</name>
<gene>
    <name evidence="1" type="primary">fabZ</name>
    <name type="ordered locus">SUB1493</name>
</gene>
<feature type="chain" id="PRO_1000134715" description="3-hydroxyacyl-[acyl-carrier-protein] dehydratase FabZ">
    <location>
        <begin position="1"/>
        <end position="140"/>
    </location>
</feature>
<feature type="active site" evidence="1">
    <location>
        <position position="47"/>
    </location>
</feature>
<keyword id="KW-0963">Cytoplasm</keyword>
<keyword id="KW-0441">Lipid A biosynthesis</keyword>
<keyword id="KW-0444">Lipid biosynthesis</keyword>
<keyword id="KW-0443">Lipid metabolism</keyword>
<keyword id="KW-0456">Lyase</keyword>
<keyword id="KW-1185">Reference proteome</keyword>
<reference key="1">
    <citation type="journal article" date="2009" name="BMC Genomics">
        <title>Evidence for niche adaptation in the genome of the bovine pathogen Streptococcus uberis.</title>
        <authorList>
            <person name="Ward P.N."/>
            <person name="Holden M.T.G."/>
            <person name="Leigh J.A."/>
            <person name="Lennard N."/>
            <person name="Bignell A."/>
            <person name="Barron A."/>
            <person name="Clark L."/>
            <person name="Quail M.A."/>
            <person name="Woodward J."/>
            <person name="Barrell B.G."/>
            <person name="Egan S.A."/>
            <person name="Field T.R."/>
            <person name="Maskell D."/>
            <person name="Kehoe M."/>
            <person name="Dowson C.G."/>
            <person name="Chanter N."/>
            <person name="Whatmore A.M."/>
            <person name="Bentley S.D."/>
            <person name="Parkhill J."/>
        </authorList>
    </citation>
    <scope>NUCLEOTIDE SEQUENCE [LARGE SCALE GENOMIC DNA]</scope>
    <source>
        <strain>ATCC BAA-854 / 0140J</strain>
    </source>
</reference>
<evidence type="ECO:0000255" key="1">
    <source>
        <dbReference type="HAMAP-Rule" id="MF_00406"/>
    </source>
</evidence>
<proteinExistence type="inferred from homology"/>
<comment type="function">
    <text evidence="1">Involved in unsaturated fatty acids biosynthesis. Catalyzes the dehydration of short chain beta-hydroxyacyl-ACPs and long chain saturated and unsaturated beta-hydroxyacyl-ACPs.</text>
</comment>
<comment type="catalytic activity">
    <reaction evidence="1">
        <text>a (3R)-hydroxyacyl-[ACP] = a (2E)-enoyl-[ACP] + H2O</text>
        <dbReference type="Rhea" id="RHEA:13097"/>
        <dbReference type="Rhea" id="RHEA-COMP:9925"/>
        <dbReference type="Rhea" id="RHEA-COMP:9945"/>
        <dbReference type="ChEBI" id="CHEBI:15377"/>
        <dbReference type="ChEBI" id="CHEBI:78784"/>
        <dbReference type="ChEBI" id="CHEBI:78827"/>
        <dbReference type="EC" id="4.2.1.59"/>
    </reaction>
</comment>
<comment type="subcellular location">
    <subcellularLocation>
        <location evidence="1">Cytoplasm</location>
    </subcellularLocation>
</comment>
<comment type="similarity">
    <text evidence="1">Belongs to the thioester dehydratase family. FabZ subfamily.</text>
</comment>